<feature type="chain" id="PRO_0000319890" description="Hydroxysteroid dehydrogenase-like protein 2">
    <location>
        <begin position="1"/>
        <end position="418"/>
    </location>
</feature>
<feature type="domain" description="SCP2">
    <location>
        <begin position="306"/>
        <end position="415"/>
    </location>
</feature>
<feature type="region of interest" description="Disordered" evidence="4">
    <location>
        <begin position="287"/>
        <end position="310"/>
    </location>
</feature>
<feature type="active site" description="Proton acceptor" evidence="3">
    <location>
        <position position="168"/>
    </location>
</feature>
<feature type="binding site" evidence="2">
    <location>
        <begin position="17"/>
        <end position="23"/>
    </location>
    <ligand>
        <name>NADP(+)</name>
        <dbReference type="ChEBI" id="CHEBI:58349"/>
    </ligand>
</feature>
<feature type="binding site" evidence="2">
    <location>
        <position position="42"/>
    </location>
    <ligand>
        <name>NADP(+)</name>
        <dbReference type="ChEBI" id="CHEBI:58349"/>
    </ligand>
</feature>
<feature type="binding site" evidence="2">
    <location>
        <position position="74"/>
    </location>
    <ligand>
        <name>NADP(+)</name>
        <dbReference type="ChEBI" id="CHEBI:58349"/>
    </ligand>
</feature>
<feature type="binding site" evidence="2">
    <location>
        <position position="172"/>
    </location>
    <ligand>
        <name>NADP(+)</name>
        <dbReference type="ChEBI" id="CHEBI:58349"/>
    </ligand>
</feature>
<feature type="modified residue" description="N6-(2-hydroxyisobutyryl)lysine" evidence="2">
    <location>
        <position position="42"/>
    </location>
</feature>
<feature type="modified residue" description="N6-acetyllysine" evidence="1">
    <location>
        <position position="116"/>
    </location>
</feature>
<feature type="modified residue" description="N6-succinyllysine" evidence="1">
    <location>
        <position position="318"/>
    </location>
</feature>
<sequence>MLPNTGRLAGCTVFITGASRGIGKAIALKAAKDGANIVIAAKTAQPHPKLLGTIYTAAEEIEAVGGKALPCIVDVRDEQQINAAVEKAIKQFGGIDILVNNASAISLTNTLDTPTKRLDLMMNVNTRGTYLASKACIPYLKKSKVAHILNISPPLNLNPIWFKQHCAYTIAKYGMSMYVLGMAEEFKGEIAVNALWPKTAIHTAAMDMLGGPGIESQCRKVDIIADAAYSIFQKPKSFTGNFVIDESILKEEGIENFDVYAIKPGHPLQPDFFLDEYPEAVSKKMESTGAVPEFKEEKPQPQPKPRSGAVEETFRIVKDSLSDDVVKATQAVYLFELSGEDGGTWFLDLKSKGGNVGYGEPSDQADVVMSMTTDDFVKMFSGKLKPTMAFMSGKLKIKGNMALAIKLEKLMNQMNARL</sequence>
<organism>
    <name type="scientific">Pongo abelii</name>
    <name type="common">Sumatran orangutan</name>
    <name type="synonym">Pongo pygmaeus abelii</name>
    <dbReference type="NCBI Taxonomy" id="9601"/>
    <lineage>
        <taxon>Eukaryota</taxon>
        <taxon>Metazoa</taxon>
        <taxon>Chordata</taxon>
        <taxon>Craniata</taxon>
        <taxon>Vertebrata</taxon>
        <taxon>Euteleostomi</taxon>
        <taxon>Mammalia</taxon>
        <taxon>Eutheria</taxon>
        <taxon>Euarchontoglires</taxon>
        <taxon>Primates</taxon>
        <taxon>Haplorrhini</taxon>
        <taxon>Catarrhini</taxon>
        <taxon>Hominidae</taxon>
        <taxon>Pongo</taxon>
    </lineage>
</organism>
<protein>
    <recommendedName>
        <fullName>Hydroxysteroid dehydrogenase-like protein 2</fullName>
        <ecNumber>1.-.-.-</ecNumber>
    </recommendedName>
</protein>
<name>HSDL2_PONAB</name>
<reference key="1">
    <citation type="submission" date="2004-11" db="EMBL/GenBank/DDBJ databases">
        <authorList>
            <consortium name="The German cDNA consortium"/>
        </authorList>
    </citation>
    <scope>NUCLEOTIDE SEQUENCE [LARGE SCALE MRNA]</scope>
    <source>
        <tissue>Brain cortex</tissue>
    </source>
</reference>
<gene>
    <name type="primary">HSDL2</name>
</gene>
<proteinExistence type="evidence at transcript level"/>
<keyword id="KW-0007">Acetylation</keyword>
<keyword id="KW-0379">Hydroxylation</keyword>
<keyword id="KW-0496">Mitochondrion</keyword>
<keyword id="KW-0521">NADP</keyword>
<keyword id="KW-0560">Oxidoreductase</keyword>
<keyword id="KW-0576">Peroxisome</keyword>
<keyword id="KW-1185">Reference proteome</keyword>
<evidence type="ECO:0000250" key="1">
    <source>
        <dbReference type="UniProtKB" id="Q2TPA8"/>
    </source>
</evidence>
<evidence type="ECO:0000250" key="2">
    <source>
        <dbReference type="UniProtKB" id="Q6YN16"/>
    </source>
</evidence>
<evidence type="ECO:0000255" key="3">
    <source>
        <dbReference type="PROSITE-ProRule" id="PRU10001"/>
    </source>
</evidence>
<evidence type="ECO:0000256" key="4">
    <source>
        <dbReference type="SAM" id="MobiDB-lite"/>
    </source>
</evidence>
<evidence type="ECO:0000305" key="5"/>
<accession>Q5RA68</accession>
<comment type="function">
    <text evidence="2">Has apparently no steroid dehydrogenase activity. Controls bile acid (BA) and lipid metabolism in response to nutritional cues.</text>
</comment>
<comment type="subcellular location">
    <subcellularLocation>
        <location evidence="2">Peroxisome</location>
    </subcellularLocation>
    <subcellularLocation>
        <location evidence="2">Mitochondrion</location>
    </subcellularLocation>
</comment>
<comment type="similarity">
    <text evidence="5">Belongs to the short-chain dehydrogenases/reductases (SDR) family.</text>
</comment>
<dbReference type="EC" id="1.-.-.-"/>
<dbReference type="EMBL" id="CR859151">
    <property type="protein sequence ID" value="CAH91342.1"/>
    <property type="molecule type" value="mRNA"/>
</dbReference>
<dbReference type="RefSeq" id="NP_001125794.1">
    <property type="nucleotide sequence ID" value="NM_001132322.2"/>
</dbReference>
<dbReference type="SMR" id="Q5RA68"/>
<dbReference type="FunCoup" id="Q5RA68">
    <property type="interactions" value="1336"/>
</dbReference>
<dbReference type="STRING" id="9601.ENSPPYP00000021856"/>
<dbReference type="GeneID" id="100172722"/>
<dbReference type="KEGG" id="pon:100172722"/>
<dbReference type="CTD" id="84263"/>
<dbReference type="eggNOG" id="KOG0725">
    <property type="taxonomic scope" value="Eukaryota"/>
</dbReference>
<dbReference type="eggNOG" id="KOG4170">
    <property type="taxonomic scope" value="Eukaryota"/>
</dbReference>
<dbReference type="InParanoid" id="Q5RA68"/>
<dbReference type="OrthoDB" id="5327538at2759"/>
<dbReference type="Proteomes" id="UP000001595">
    <property type="component" value="Unplaced"/>
</dbReference>
<dbReference type="GO" id="GO:0005739">
    <property type="term" value="C:mitochondrion"/>
    <property type="evidence" value="ECO:0000250"/>
    <property type="project" value="UniProtKB"/>
</dbReference>
<dbReference type="GO" id="GO:0005777">
    <property type="term" value="C:peroxisome"/>
    <property type="evidence" value="ECO:0007669"/>
    <property type="project" value="UniProtKB-SubCell"/>
</dbReference>
<dbReference type="GO" id="GO:0016491">
    <property type="term" value="F:oxidoreductase activity"/>
    <property type="evidence" value="ECO:0007669"/>
    <property type="project" value="UniProtKB-KW"/>
</dbReference>
<dbReference type="CDD" id="cd09762">
    <property type="entry name" value="HSDL2_SDR_c"/>
    <property type="match status" value="1"/>
</dbReference>
<dbReference type="FunFam" id="3.40.50.720:FF:000301">
    <property type="entry name" value="Hydroxysteroid dehydrogenase like 2"/>
    <property type="match status" value="1"/>
</dbReference>
<dbReference type="FunFam" id="3.30.1050.10:FF:000005">
    <property type="entry name" value="hydroxysteroid dehydrogenase-like protein 2 isoform X1"/>
    <property type="match status" value="1"/>
</dbReference>
<dbReference type="Gene3D" id="3.40.50.720">
    <property type="entry name" value="NAD(P)-binding Rossmann-like Domain"/>
    <property type="match status" value="1"/>
</dbReference>
<dbReference type="Gene3D" id="3.30.1050.10">
    <property type="entry name" value="SCP2 sterol-binding domain"/>
    <property type="match status" value="1"/>
</dbReference>
<dbReference type="InterPro" id="IPR051935">
    <property type="entry name" value="HSDL2"/>
</dbReference>
<dbReference type="InterPro" id="IPR036291">
    <property type="entry name" value="NAD(P)-bd_dom_sf"/>
</dbReference>
<dbReference type="InterPro" id="IPR020904">
    <property type="entry name" value="Sc_DH/Rdtase_CS"/>
</dbReference>
<dbReference type="InterPro" id="IPR003033">
    <property type="entry name" value="SCP2_sterol-bd_dom"/>
</dbReference>
<dbReference type="InterPro" id="IPR036527">
    <property type="entry name" value="SCP2_sterol-bd_dom_sf"/>
</dbReference>
<dbReference type="InterPro" id="IPR002347">
    <property type="entry name" value="SDR_fam"/>
</dbReference>
<dbReference type="NCBIfam" id="NF006133">
    <property type="entry name" value="PRK08278.1"/>
    <property type="match status" value="1"/>
</dbReference>
<dbReference type="PANTHER" id="PTHR42808">
    <property type="entry name" value="HYDROXYSTEROID DEHYDROGENASE-LIKE PROTEIN 2"/>
    <property type="match status" value="1"/>
</dbReference>
<dbReference type="PANTHER" id="PTHR42808:SF3">
    <property type="entry name" value="HYDROXYSTEROID DEHYDROGENASE-LIKE PROTEIN 2"/>
    <property type="match status" value="1"/>
</dbReference>
<dbReference type="Pfam" id="PF00106">
    <property type="entry name" value="adh_short"/>
    <property type="match status" value="1"/>
</dbReference>
<dbReference type="Pfam" id="PF02036">
    <property type="entry name" value="SCP2"/>
    <property type="match status" value="1"/>
</dbReference>
<dbReference type="PRINTS" id="PR00081">
    <property type="entry name" value="GDHRDH"/>
</dbReference>
<dbReference type="SUPFAM" id="SSF51735">
    <property type="entry name" value="NAD(P)-binding Rossmann-fold domains"/>
    <property type="match status" value="1"/>
</dbReference>
<dbReference type="SUPFAM" id="SSF55718">
    <property type="entry name" value="SCP-like"/>
    <property type="match status" value="1"/>
</dbReference>
<dbReference type="PROSITE" id="PS00061">
    <property type="entry name" value="ADH_SHORT"/>
    <property type="match status" value="1"/>
</dbReference>